<organism>
    <name type="scientific">Rattus norvegicus</name>
    <name type="common">Rat</name>
    <dbReference type="NCBI Taxonomy" id="10116"/>
    <lineage>
        <taxon>Eukaryota</taxon>
        <taxon>Metazoa</taxon>
        <taxon>Chordata</taxon>
        <taxon>Craniata</taxon>
        <taxon>Vertebrata</taxon>
        <taxon>Euteleostomi</taxon>
        <taxon>Mammalia</taxon>
        <taxon>Eutheria</taxon>
        <taxon>Euarchontoglires</taxon>
        <taxon>Glires</taxon>
        <taxon>Rodentia</taxon>
        <taxon>Myomorpha</taxon>
        <taxon>Muroidea</taxon>
        <taxon>Muridae</taxon>
        <taxon>Murinae</taxon>
        <taxon>Rattus</taxon>
    </lineage>
</organism>
<protein>
    <recommendedName>
        <fullName>Rho guanine nucleotide exchange factor 6</fullName>
    </recommendedName>
    <alternativeName>
        <fullName>Rac/Cdc42 guanine nucleotide exchange factor 6</fullName>
    </alternativeName>
</protein>
<evidence type="ECO:0000250" key="1"/>
<evidence type="ECO:0000250" key="2">
    <source>
        <dbReference type="UniProtKB" id="Q15052"/>
    </source>
</evidence>
<evidence type="ECO:0000250" key="3">
    <source>
        <dbReference type="UniProtKB" id="Q8K4I3"/>
    </source>
</evidence>
<evidence type="ECO:0000255" key="4">
    <source>
        <dbReference type="PROSITE-ProRule" id="PRU00044"/>
    </source>
</evidence>
<evidence type="ECO:0000255" key="5">
    <source>
        <dbReference type="PROSITE-ProRule" id="PRU00062"/>
    </source>
</evidence>
<evidence type="ECO:0000255" key="6">
    <source>
        <dbReference type="PROSITE-ProRule" id="PRU00145"/>
    </source>
</evidence>
<evidence type="ECO:0000255" key="7">
    <source>
        <dbReference type="PROSITE-ProRule" id="PRU00192"/>
    </source>
</evidence>
<evidence type="ECO:0000256" key="8">
    <source>
        <dbReference type="SAM" id="MobiDB-lite"/>
    </source>
</evidence>
<evidence type="ECO:0007744" key="9">
    <source>
    </source>
</evidence>
<name>ARHG6_RAT</name>
<accession>Q5XXR3</accession>
<proteinExistence type="evidence at protein level"/>
<sequence>MNPEERVVTWLISLGVLESPKKTICDPEEFLKSSLKNGVVLCKLISRLLPGSVEKYCQEPQTEADCIDNINDFLKGCATLQVEVFEPDDLYSGANFSKVLNTLLAVNKATEDQLSERPCGRSSSLSATTSSQTNPQAAVPSTTPEQQSEEKAAEMTENGSHQLIVKARFNFKQTNEDELSVCKGDIIYVTRVEEGGWWEGTLNGRTGWFPSNYVREIKPSERPLSPKAVKGFDTAPLTKNYYTVVLQNILDTEKEYAKELQSLLVTYLRPLQSNNNLSTVEFTCLLGNFEEVCTFQQTLCQALEECSKSPENQHKVGGCLLNLMPHFKSMYLAYCANHPSAVNVLTQHSDDLERFMENQGASSPGILILTTSLSKPFMRLEKYVTLLQELERHMEDTHPDHQDILKAIIAFKSLMGQCQDLRKRKQLELQILSEPIQAWEGDDIKTLGNVIFMSQVVMQHGACEEKEERYFLLFSSVLIMLSASPRMSGFMYQGKVPIAGMVVTRLDEIEGNDCTFEITGSTVERIVVHCNNNQDFQEWMEQLNRLTKGPASCSSLSKTSSSSCSTHSSFSSTGQPRGPLEPPQIIKPWSLSCLRPAPPLRPSAALGYKERMSYILKESSKSPKTMKKFLHKRKTERKTSEEEYVIRKSTAALEEDAQILKVIEAYCTSASFQQGTRKDSVPQVLLPEEEKLIIEETRSNGQTIIEEKSLVDTVYALKDEVKELKQENKKMKQCLEEELKSRKDLEKLVRKLLKQTDESIRAESSSKTSILQ</sequence>
<feature type="chain" id="PRO_0000080919" description="Rho guanine nucleotide exchange factor 6">
    <location>
        <begin position="1"/>
        <end position="772"/>
    </location>
</feature>
<feature type="domain" description="Calponin-homology (CH)" evidence="4">
    <location>
        <begin position="1"/>
        <end position="111"/>
    </location>
</feature>
<feature type="domain" description="SH3" evidence="7">
    <location>
        <begin position="160"/>
        <end position="219"/>
    </location>
</feature>
<feature type="domain" description="DH" evidence="5">
    <location>
        <begin position="241"/>
        <end position="421"/>
    </location>
</feature>
<feature type="domain" description="PH" evidence="6">
    <location>
        <begin position="443"/>
        <end position="548"/>
    </location>
</feature>
<feature type="region of interest" description="Disordered" evidence="8">
    <location>
        <begin position="115"/>
        <end position="158"/>
    </location>
</feature>
<feature type="region of interest" description="Disordered" evidence="8">
    <location>
        <begin position="557"/>
        <end position="581"/>
    </location>
</feature>
<feature type="compositionally biased region" description="Low complexity" evidence="8">
    <location>
        <begin position="122"/>
        <end position="133"/>
    </location>
</feature>
<feature type="compositionally biased region" description="Polar residues" evidence="8">
    <location>
        <begin position="134"/>
        <end position="146"/>
    </location>
</feature>
<feature type="compositionally biased region" description="Low complexity" evidence="8">
    <location>
        <begin position="557"/>
        <end position="573"/>
    </location>
</feature>
<feature type="modified residue" description="Phosphoserine" evidence="2">
    <location>
        <position position="126"/>
    </location>
</feature>
<feature type="modified residue" description="Phosphothreonine" evidence="2">
    <location>
        <position position="133"/>
    </location>
</feature>
<feature type="modified residue" description="Phosphoserine" evidence="9">
    <location>
        <position position="225"/>
    </location>
</feature>
<feature type="modified residue" description="Phosphoserine" evidence="3">
    <location>
        <position position="488"/>
    </location>
</feature>
<feature type="modified residue" description="Phosphoserine" evidence="9">
    <location>
        <position position="640"/>
    </location>
</feature>
<feature type="modified residue" description="Phosphoserine" evidence="9">
    <location>
        <position position="680"/>
    </location>
</feature>
<keyword id="KW-0966">Cell projection</keyword>
<keyword id="KW-0344">Guanine-nucleotide releasing factor</keyword>
<keyword id="KW-0597">Phosphoprotein</keyword>
<keyword id="KW-1185">Reference proteome</keyword>
<keyword id="KW-0728">SH3 domain</keyword>
<comment type="function">
    <text evidence="1">Acts as a RAC1 guanine nucleotide exchange factor (GEF).</text>
</comment>
<comment type="subunit">
    <text evidence="2 3">Interacts with PAK kinases through the SH3 domain. Interacts with GIT1. Interacts with PARVB. Component of cytoplasmic complexes, which also contain PXN, GIT1 and PAK1. Interacts with BIN2. Identified in a complex with BIN2 and GIT2 (By similarity). Interacts with PARVG; the guanine nucleotide exchange factor activity of ARHGEF6 is essential for PARVG-induced enhancement of cell spreading (By similarity).</text>
</comment>
<comment type="subcellular location">
    <subcellularLocation>
        <location evidence="3">Cell projection</location>
        <location evidence="3">Lamellipodium</location>
    </subcellularLocation>
</comment>
<reference key="1">
    <citation type="submission" date="2004-08" db="EMBL/GenBank/DDBJ databases">
        <title>Cloning of full length rat rac/cdc42 guanine nucleotide exchange factor 6 (ARHGEF6) cDNA.</title>
        <authorList>
            <person name="Node-Langlois R."/>
            <person name="Jordain-Parisi L."/>
            <person name="Muller D."/>
            <person name="Boda B."/>
        </authorList>
    </citation>
    <scope>NUCLEOTIDE SEQUENCE [MRNA]</scope>
    <source>
        <strain>Wistar</strain>
    </source>
</reference>
<reference key="2">
    <citation type="journal article" date="2012" name="Nat. Commun.">
        <title>Quantitative maps of protein phosphorylation sites across 14 different rat organs and tissues.</title>
        <authorList>
            <person name="Lundby A."/>
            <person name="Secher A."/>
            <person name="Lage K."/>
            <person name="Nordsborg N.B."/>
            <person name="Dmytriyev A."/>
            <person name="Lundby C."/>
            <person name="Olsen J.V."/>
        </authorList>
    </citation>
    <scope>PHOSPHORYLATION [LARGE SCALE ANALYSIS] AT SER-225; SER-640 AND SER-680</scope>
    <scope>IDENTIFICATION BY MASS SPECTROMETRY [LARGE SCALE ANALYSIS]</scope>
</reference>
<gene>
    <name type="primary">Arhgef6</name>
</gene>
<dbReference type="EMBL" id="AY725848">
    <property type="protein sequence ID" value="AAU43636.1"/>
    <property type="molecule type" value="mRNA"/>
</dbReference>
<dbReference type="RefSeq" id="NP_001005565.1">
    <property type="nucleotide sequence ID" value="NM_001005565.1"/>
</dbReference>
<dbReference type="BMRB" id="Q5XXR3"/>
<dbReference type="SMR" id="Q5XXR3"/>
<dbReference type="FunCoup" id="Q5XXR3">
    <property type="interactions" value="429"/>
</dbReference>
<dbReference type="STRING" id="10116.ENSRNOP00000001158"/>
<dbReference type="CarbonylDB" id="Q5XXR3"/>
<dbReference type="iPTMnet" id="Q5XXR3"/>
<dbReference type="PhosphoSitePlus" id="Q5XXR3"/>
<dbReference type="PaxDb" id="10116-ENSRNOP00000001158"/>
<dbReference type="GeneID" id="363509"/>
<dbReference type="KEGG" id="rno:363509"/>
<dbReference type="AGR" id="RGD:1359674"/>
<dbReference type="CTD" id="9459"/>
<dbReference type="RGD" id="1359674">
    <property type="gene designation" value="Arhgef6"/>
</dbReference>
<dbReference type="eggNOG" id="KOG2070">
    <property type="taxonomic scope" value="Eukaryota"/>
</dbReference>
<dbReference type="InParanoid" id="Q5XXR3"/>
<dbReference type="PhylomeDB" id="Q5XXR3"/>
<dbReference type="Reactome" id="R-RNO-193648">
    <property type="pathway name" value="NRAGE signals death through JNK"/>
</dbReference>
<dbReference type="Reactome" id="R-RNO-416482">
    <property type="pathway name" value="G alpha (12/13) signalling events"/>
</dbReference>
<dbReference type="Reactome" id="R-RNO-446388">
    <property type="pathway name" value="Regulation of cytoskeletal remodeling and cell spreading by IPP complex components"/>
</dbReference>
<dbReference type="Reactome" id="R-RNO-8964616">
    <property type="pathway name" value="G beta:gamma signalling through CDC42"/>
</dbReference>
<dbReference type="Reactome" id="R-RNO-9013148">
    <property type="pathway name" value="CDC42 GTPase cycle"/>
</dbReference>
<dbReference type="Reactome" id="R-RNO-9013149">
    <property type="pathway name" value="RAC1 GTPase cycle"/>
</dbReference>
<dbReference type="Reactome" id="R-RNO-9013420">
    <property type="pathway name" value="RHOU GTPase cycle"/>
</dbReference>
<dbReference type="PRO" id="PR:Q5XXR3"/>
<dbReference type="Proteomes" id="UP000002494">
    <property type="component" value="Unplaced"/>
</dbReference>
<dbReference type="GO" id="GO:0005911">
    <property type="term" value="C:cell-cell junction"/>
    <property type="evidence" value="ECO:0000266"/>
    <property type="project" value="RGD"/>
</dbReference>
<dbReference type="GO" id="GO:0005737">
    <property type="term" value="C:cytoplasm"/>
    <property type="evidence" value="ECO:0000318"/>
    <property type="project" value="GO_Central"/>
</dbReference>
<dbReference type="GO" id="GO:0030027">
    <property type="term" value="C:lamellipodium"/>
    <property type="evidence" value="ECO:0000250"/>
    <property type="project" value="UniProtKB"/>
</dbReference>
<dbReference type="GO" id="GO:0005085">
    <property type="term" value="F:guanyl-nucleotide exchange factor activity"/>
    <property type="evidence" value="ECO:0000318"/>
    <property type="project" value="GO_Central"/>
</dbReference>
<dbReference type="GO" id="GO:0035556">
    <property type="term" value="P:intracellular signal transduction"/>
    <property type="evidence" value="ECO:0007669"/>
    <property type="project" value="InterPro"/>
</dbReference>
<dbReference type="GO" id="GO:0030032">
    <property type="term" value="P:lamellipodium assembly"/>
    <property type="evidence" value="ECO:0000250"/>
    <property type="project" value="UniProtKB"/>
</dbReference>
<dbReference type="CDD" id="cd21265">
    <property type="entry name" value="CH_alphaPIX"/>
    <property type="match status" value="1"/>
</dbReference>
<dbReference type="CDD" id="cd01225">
    <property type="entry name" value="PH_Cool_Pix"/>
    <property type="match status" value="1"/>
</dbReference>
<dbReference type="CDD" id="cd00160">
    <property type="entry name" value="RhoGEF"/>
    <property type="match status" value="1"/>
</dbReference>
<dbReference type="CDD" id="cd12060">
    <property type="entry name" value="SH3_alphaPIX"/>
    <property type="match status" value="1"/>
</dbReference>
<dbReference type="FunFam" id="2.30.30.40:FF:000034">
    <property type="entry name" value="Rho guanine nucleotide exchange factor (GEF) 7"/>
    <property type="match status" value="1"/>
</dbReference>
<dbReference type="FunFam" id="1.20.900.10:FF:000016">
    <property type="entry name" value="Rho guanine nucleotide exchange factor 6"/>
    <property type="match status" value="1"/>
</dbReference>
<dbReference type="FunFam" id="2.30.29.30:FF:000094">
    <property type="entry name" value="Rho guanine nucleotide exchange factor 7"/>
    <property type="match status" value="1"/>
</dbReference>
<dbReference type="FunFam" id="1.10.418.10:FF:000049">
    <property type="entry name" value="Rho guanine nucleotide exchange factor 7 isoform X1"/>
    <property type="match status" value="1"/>
</dbReference>
<dbReference type="Gene3D" id="1.10.418.10">
    <property type="entry name" value="Calponin-like domain"/>
    <property type="match status" value="1"/>
</dbReference>
<dbReference type="Gene3D" id="1.20.900.10">
    <property type="entry name" value="Dbl homology (DH) domain"/>
    <property type="match status" value="1"/>
</dbReference>
<dbReference type="Gene3D" id="1.20.5.390">
    <property type="entry name" value="L1 transposable element, trimerization domain"/>
    <property type="match status" value="1"/>
</dbReference>
<dbReference type="Gene3D" id="2.30.29.30">
    <property type="entry name" value="Pleckstrin-homology domain (PH domain)/Phosphotyrosine-binding domain (PTB)"/>
    <property type="match status" value="1"/>
</dbReference>
<dbReference type="Gene3D" id="2.30.30.40">
    <property type="entry name" value="SH3 Domains"/>
    <property type="match status" value="1"/>
</dbReference>
<dbReference type="InterPro" id="IPR035788">
    <property type="entry name" value="AlphaPIX_SH3"/>
</dbReference>
<dbReference type="InterPro" id="IPR001715">
    <property type="entry name" value="CH_dom"/>
</dbReference>
<dbReference type="InterPro" id="IPR036872">
    <property type="entry name" value="CH_dom_sf"/>
</dbReference>
<dbReference type="InterPro" id="IPR035899">
    <property type="entry name" value="DBL_dom_sf"/>
</dbReference>
<dbReference type="InterPro" id="IPR000219">
    <property type="entry name" value="DH_dom"/>
</dbReference>
<dbReference type="InterPro" id="IPR001331">
    <property type="entry name" value="GDS_CDC24_CS"/>
</dbReference>
<dbReference type="InterPro" id="IPR032409">
    <property type="entry name" value="GEF6/7_CC"/>
</dbReference>
<dbReference type="InterPro" id="IPR011993">
    <property type="entry name" value="PH-like_dom_sf"/>
</dbReference>
<dbReference type="InterPro" id="IPR046376">
    <property type="entry name" value="PH_Cool_Pix"/>
</dbReference>
<dbReference type="InterPro" id="IPR001849">
    <property type="entry name" value="PH_domain"/>
</dbReference>
<dbReference type="InterPro" id="IPR036028">
    <property type="entry name" value="SH3-like_dom_sf"/>
</dbReference>
<dbReference type="InterPro" id="IPR001452">
    <property type="entry name" value="SH3_domain"/>
</dbReference>
<dbReference type="PANTHER" id="PTHR46026:SF2">
    <property type="entry name" value="RHO GUANINE NUCLEOTIDE EXCHANGE FACTOR 6"/>
    <property type="match status" value="1"/>
</dbReference>
<dbReference type="PANTHER" id="PTHR46026">
    <property type="entry name" value="RHO-TYPE GUANINE NUCLEOTIDE EXCHANGE FACTOR, ISOFORM F"/>
    <property type="match status" value="1"/>
</dbReference>
<dbReference type="Pfam" id="PF16523">
    <property type="entry name" value="betaPIX_CC"/>
    <property type="match status" value="1"/>
</dbReference>
<dbReference type="Pfam" id="PF00307">
    <property type="entry name" value="CH"/>
    <property type="match status" value="1"/>
</dbReference>
<dbReference type="Pfam" id="PF00169">
    <property type="entry name" value="PH"/>
    <property type="match status" value="1"/>
</dbReference>
<dbReference type="Pfam" id="PF00621">
    <property type="entry name" value="RhoGEF"/>
    <property type="match status" value="1"/>
</dbReference>
<dbReference type="Pfam" id="PF16615">
    <property type="entry name" value="RhoGEF67_u1"/>
    <property type="match status" value="1"/>
</dbReference>
<dbReference type="Pfam" id="PF16614">
    <property type="entry name" value="RhoGEF67_u2"/>
    <property type="match status" value="1"/>
</dbReference>
<dbReference type="Pfam" id="PF07653">
    <property type="entry name" value="SH3_2"/>
    <property type="match status" value="1"/>
</dbReference>
<dbReference type="PRINTS" id="PR00452">
    <property type="entry name" value="SH3DOMAIN"/>
</dbReference>
<dbReference type="SMART" id="SM00033">
    <property type="entry name" value="CH"/>
    <property type="match status" value="1"/>
</dbReference>
<dbReference type="SMART" id="SM00233">
    <property type="entry name" value="PH"/>
    <property type="match status" value="1"/>
</dbReference>
<dbReference type="SMART" id="SM00325">
    <property type="entry name" value="RhoGEF"/>
    <property type="match status" value="1"/>
</dbReference>
<dbReference type="SMART" id="SM00326">
    <property type="entry name" value="SH3"/>
    <property type="match status" value="1"/>
</dbReference>
<dbReference type="SUPFAM" id="SSF47576">
    <property type="entry name" value="Calponin-homology domain, CH-domain"/>
    <property type="match status" value="1"/>
</dbReference>
<dbReference type="SUPFAM" id="SSF48065">
    <property type="entry name" value="DBL homology domain (DH-domain)"/>
    <property type="match status" value="1"/>
</dbReference>
<dbReference type="SUPFAM" id="SSF50729">
    <property type="entry name" value="PH domain-like"/>
    <property type="match status" value="1"/>
</dbReference>
<dbReference type="SUPFAM" id="SSF50044">
    <property type="entry name" value="SH3-domain"/>
    <property type="match status" value="1"/>
</dbReference>
<dbReference type="PROSITE" id="PS50021">
    <property type="entry name" value="CH"/>
    <property type="match status" value="1"/>
</dbReference>
<dbReference type="PROSITE" id="PS00741">
    <property type="entry name" value="DH_1"/>
    <property type="match status" value="1"/>
</dbReference>
<dbReference type="PROSITE" id="PS50010">
    <property type="entry name" value="DH_2"/>
    <property type="match status" value="1"/>
</dbReference>
<dbReference type="PROSITE" id="PS50003">
    <property type="entry name" value="PH_DOMAIN"/>
    <property type="match status" value="1"/>
</dbReference>
<dbReference type="PROSITE" id="PS50002">
    <property type="entry name" value="SH3"/>
    <property type="match status" value="1"/>
</dbReference>